<comment type="function">
    <text evidence="1">Participates in a DNA-damage check-point that is active prior to asymmetric division when DNA is damaged. DisA forms globular foci that rapidly scan along the chromosomes during sporulation, searching for lesions. When a lesion is present, DisA pauses at the lesion site. This triggers a cellular response that culminates in a temporary block in sporulation initiation.</text>
</comment>
<comment type="function">
    <text evidence="1">Also has diadenylate cyclase activity, catalyzing the condensation of 2 ATP molecules into cyclic di-AMP (c-di-AMP). c-di-AMP acts as a signaling molecule that couples DNA integrity with progression of sporulation. The rise in c-di-AMP level generated by DisA while scanning the chromosome, operates as a positive signal that advances sporulation; upon encountering a lesion, the DisA focus arrests at the damaged site and halts c-di-AMP synthesis.</text>
</comment>
<comment type="catalytic activity">
    <reaction evidence="1">
        <text>2 ATP = 3',3'-c-di-AMP + 2 diphosphate</text>
        <dbReference type="Rhea" id="RHEA:35655"/>
        <dbReference type="ChEBI" id="CHEBI:30616"/>
        <dbReference type="ChEBI" id="CHEBI:33019"/>
        <dbReference type="ChEBI" id="CHEBI:71500"/>
        <dbReference type="EC" id="2.7.7.85"/>
    </reaction>
</comment>
<comment type="cofactor">
    <cofactor evidence="1">
        <name>Mg(2+)</name>
        <dbReference type="ChEBI" id="CHEBI:18420"/>
    </cofactor>
</comment>
<comment type="subunit">
    <text evidence="1">Homooctamer.</text>
</comment>
<comment type="similarity">
    <text evidence="1">Belongs to the DisA family.</text>
</comment>
<reference key="1">
    <citation type="journal article" date="2002" name="Proc. Natl. Acad. Sci. U.S.A.">
        <title>Complete genome sequence of Clostridium perfringens, an anaerobic flesh-eater.</title>
        <authorList>
            <person name="Shimizu T."/>
            <person name="Ohtani K."/>
            <person name="Hirakawa H."/>
            <person name="Ohshima K."/>
            <person name="Yamashita A."/>
            <person name="Shiba T."/>
            <person name="Ogasawara N."/>
            <person name="Hattori M."/>
            <person name="Kuhara S."/>
            <person name="Hayashi H."/>
        </authorList>
    </citation>
    <scope>NUCLEOTIDE SEQUENCE [LARGE SCALE GENOMIC DNA]</scope>
    <source>
        <strain>13 / Type A</strain>
    </source>
</reference>
<keyword id="KW-0067">ATP-binding</keyword>
<keyword id="KW-0227">DNA damage</keyword>
<keyword id="KW-0234">DNA repair</keyword>
<keyword id="KW-0238">DNA-binding</keyword>
<keyword id="KW-0460">Magnesium</keyword>
<keyword id="KW-0547">Nucleotide-binding</keyword>
<keyword id="KW-0548">Nucleotidyltransferase</keyword>
<keyword id="KW-1185">Reference proteome</keyword>
<keyword id="KW-0808">Transferase</keyword>
<evidence type="ECO:0000255" key="1">
    <source>
        <dbReference type="HAMAP-Rule" id="MF_01438"/>
    </source>
</evidence>
<evidence type="ECO:0000255" key="2">
    <source>
        <dbReference type="PROSITE-ProRule" id="PRU01130"/>
    </source>
</evidence>
<dbReference type="EC" id="2.7.7.85" evidence="1"/>
<dbReference type="EMBL" id="BA000016">
    <property type="protein sequence ID" value="BAB82138.1"/>
    <property type="molecule type" value="Genomic_DNA"/>
</dbReference>
<dbReference type="RefSeq" id="WP_003452233.1">
    <property type="nucleotide sequence ID" value="NC_003366.1"/>
</dbReference>
<dbReference type="SMR" id="Q8XHQ0"/>
<dbReference type="STRING" id="195102.gene:10491750"/>
<dbReference type="GeneID" id="93000981"/>
<dbReference type="KEGG" id="cpe:CPE2432"/>
<dbReference type="HOGENOM" id="CLU_787128_0_0_9"/>
<dbReference type="Proteomes" id="UP000000818">
    <property type="component" value="Chromosome"/>
</dbReference>
<dbReference type="GO" id="GO:0004016">
    <property type="term" value="F:adenylate cyclase activity"/>
    <property type="evidence" value="ECO:0007669"/>
    <property type="project" value="TreeGrafter"/>
</dbReference>
<dbReference type="GO" id="GO:0005524">
    <property type="term" value="F:ATP binding"/>
    <property type="evidence" value="ECO:0007669"/>
    <property type="project" value="UniProtKB-UniRule"/>
</dbReference>
<dbReference type="GO" id="GO:0106408">
    <property type="term" value="F:diadenylate cyclase activity"/>
    <property type="evidence" value="ECO:0007669"/>
    <property type="project" value="UniProtKB-EC"/>
</dbReference>
<dbReference type="GO" id="GO:0003677">
    <property type="term" value="F:DNA binding"/>
    <property type="evidence" value="ECO:0007669"/>
    <property type="project" value="UniProtKB-UniRule"/>
</dbReference>
<dbReference type="GO" id="GO:0006281">
    <property type="term" value="P:DNA repair"/>
    <property type="evidence" value="ECO:0007669"/>
    <property type="project" value="UniProtKB-UniRule"/>
</dbReference>
<dbReference type="FunFam" id="3.40.1700.10:FF:000001">
    <property type="entry name" value="DNA integrity scanning protein DisA"/>
    <property type="match status" value="1"/>
</dbReference>
<dbReference type="Gene3D" id="1.10.150.20">
    <property type="entry name" value="5' to 3' exonuclease, C-terminal subdomain"/>
    <property type="match status" value="1"/>
</dbReference>
<dbReference type="Gene3D" id="1.20.1260.110">
    <property type="entry name" value="DNA integrity scanning linker region"/>
    <property type="match status" value="1"/>
</dbReference>
<dbReference type="Gene3D" id="3.40.1700.10">
    <property type="entry name" value="DNA integrity scanning protein, DisA, N-terminal domain"/>
    <property type="match status" value="1"/>
</dbReference>
<dbReference type="HAMAP" id="MF_01438">
    <property type="entry name" value="DisA"/>
    <property type="match status" value="1"/>
</dbReference>
<dbReference type="InterPro" id="IPR050338">
    <property type="entry name" value="DisA"/>
</dbReference>
<dbReference type="InterPro" id="IPR038331">
    <property type="entry name" value="DisA_sf"/>
</dbReference>
<dbReference type="InterPro" id="IPR036888">
    <property type="entry name" value="DNA_integrity_DisA_N_sf"/>
</dbReference>
<dbReference type="InterPro" id="IPR018906">
    <property type="entry name" value="DNA_integrity_scan_DisA_link"/>
</dbReference>
<dbReference type="InterPro" id="IPR003390">
    <property type="entry name" value="DNA_integrity_scan_DisA_N"/>
</dbReference>
<dbReference type="InterPro" id="IPR023763">
    <property type="entry name" value="DNA_integrity_scanning_protein"/>
</dbReference>
<dbReference type="InterPro" id="IPR010994">
    <property type="entry name" value="RuvA_2-like"/>
</dbReference>
<dbReference type="NCBIfam" id="NF010009">
    <property type="entry name" value="PRK13482.1"/>
    <property type="match status" value="1"/>
</dbReference>
<dbReference type="PANTHER" id="PTHR34185">
    <property type="entry name" value="DIADENYLATE CYCLASE"/>
    <property type="match status" value="1"/>
</dbReference>
<dbReference type="PANTHER" id="PTHR34185:SF3">
    <property type="entry name" value="DNA INTEGRITY SCANNING PROTEIN DISA"/>
    <property type="match status" value="1"/>
</dbReference>
<dbReference type="Pfam" id="PF02457">
    <property type="entry name" value="DAC"/>
    <property type="match status" value="1"/>
</dbReference>
<dbReference type="Pfam" id="PF10635">
    <property type="entry name" value="DisA-linker"/>
    <property type="match status" value="1"/>
</dbReference>
<dbReference type="SUPFAM" id="SSF47781">
    <property type="entry name" value="RuvA domain 2-like"/>
    <property type="match status" value="1"/>
</dbReference>
<dbReference type="SUPFAM" id="SSF143597">
    <property type="entry name" value="YojJ-like"/>
    <property type="match status" value="1"/>
</dbReference>
<dbReference type="PROSITE" id="PS51794">
    <property type="entry name" value="DAC"/>
    <property type="match status" value="1"/>
</dbReference>
<feature type="chain" id="PRO_0000255641" description="DNA integrity scanning protein DisA">
    <location>
        <begin position="1"/>
        <end position="354"/>
    </location>
</feature>
<feature type="domain" description="DAC" evidence="2">
    <location>
        <begin position="6"/>
        <end position="144"/>
    </location>
</feature>
<feature type="binding site" evidence="1">
    <location>
        <position position="73"/>
    </location>
    <ligand>
        <name>ATP</name>
        <dbReference type="ChEBI" id="CHEBI:30616"/>
    </ligand>
</feature>
<feature type="binding site" evidence="1">
    <location>
        <position position="91"/>
    </location>
    <ligand>
        <name>ATP</name>
        <dbReference type="ChEBI" id="CHEBI:30616"/>
    </ligand>
</feature>
<feature type="binding site" evidence="1">
    <location>
        <begin position="104"/>
        <end position="108"/>
    </location>
    <ligand>
        <name>ATP</name>
        <dbReference type="ChEBI" id="CHEBI:30616"/>
    </ligand>
</feature>
<organism>
    <name type="scientific">Clostridium perfringens (strain 13 / Type A)</name>
    <dbReference type="NCBI Taxonomy" id="195102"/>
    <lineage>
        <taxon>Bacteria</taxon>
        <taxon>Bacillati</taxon>
        <taxon>Bacillota</taxon>
        <taxon>Clostridia</taxon>
        <taxon>Eubacteriales</taxon>
        <taxon>Clostridiaceae</taxon>
        <taxon>Clostridium</taxon>
    </lineage>
</organism>
<gene>
    <name evidence="1" type="primary">disA</name>
    <name type="ordered locus">CPE2432</name>
</gene>
<proteinExistence type="inferred from homology"/>
<protein>
    <recommendedName>
        <fullName evidence="1">DNA integrity scanning protein DisA</fullName>
    </recommendedName>
    <alternativeName>
        <fullName evidence="1">Cyclic di-AMP synthase</fullName>
        <shortName evidence="1">c-di-AMP synthase</shortName>
    </alternativeName>
    <alternativeName>
        <fullName evidence="1">Diadenylate cyclase</fullName>
        <ecNumber evidence="1">2.7.7.85</ecNumber>
    </alternativeName>
</protein>
<accession>Q8XHQ0</accession>
<name>DISA_CLOPE</name>
<sequence>MRTVHDDELKKILKIMSPGTSLREGLDNILRAKTGGLIVLGDNEEILDLVDGGFNINSEYSPAYIYELAKMDGALVLTSDRKRILYANAQLMPNQSISTFETGTRHRTAQRVAKQTNKIAIAISQRRNIITVYKGDIKYVLRDSAVILSKANQAIQTLEKYVAVLERVTNNLNILEFQDLATLFDVTTAIQRTEMVMRIVEEIEGYIIELGNEGRLISMQLNELVRSIEQDGVLLIRDYCYDKMEYNDVYKEIQELSAEDLLDLDIIAKELGYVGKSLIDTLVSPRGYRISNKVPRIPSNVIENLVGHFGKLKYILEAGNEELDQVEGIGEARARAIKNGLRRIREQVALNKNL</sequence>